<keyword id="KW-0106">Calcium</keyword>
<keyword id="KW-1015">Disulfide bond</keyword>
<keyword id="KW-0325">Glycoprotein</keyword>
<keyword id="KW-0378">Hydrolase</keyword>
<keyword id="KW-0458">Lysosome</keyword>
<keyword id="KW-0479">Metal-binding</keyword>
<keyword id="KW-1185">Reference proteome</keyword>
<keyword id="KW-0732">Signal</keyword>
<accession>Q32KJ9</accession>
<name>ARSG_RAT</name>
<comment type="function">
    <text evidence="3">Displays arylsulfatase activity at acidic pH towards the artificial substrate p-nitrocatechol sulfate (By similarity). Catalyzes the hydrolysis of the 3-sulfate groups of the N-sulfo-D-glucosamine 3-O-sulfate units of heparin (By similarity).</text>
</comment>
<comment type="catalytic activity">
    <reaction evidence="3">
        <text>an aryl sulfate + H2O = a phenol + sulfate + H(+)</text>
        <dbReference type="Rhea" id="RHEA:17261"/>
        <dbReference type="ChEBI" id="CHEBI:15377"/>
        <dbReference type="ChEBI" id="CHEBI:15378"/>
        <dbReference type="ChEBI" id="CHEBI:16189"/>
        <dbReference type="ChEBI" id="CHEBI:33853"/>
        <dbReference type="ChEBI" id="CHEBI:140317"/>
        <dbReference type="EC" id="3.1.6.1"/>
    </reaction>
</comment>
<comment type="catalytic activity">
    <reaction evidence="3">
        <text>Hydrolysis of the 3-sulfate groups of the N-sulfo-D-glucosamine 3-O-sulfate units of heparin.</text>
        <dbReference type="EC" id="3.1.6.15"/>
    </reaction>
</comment>
<comment type="cofactor">
    <cofactor evidence="1">
        <name>Ca(2+)</name>
        <dbReference type="ChEBI" id="CHEBI:29108"/>
    </cofactor>
    <text evidence="1">Binds 1 Ca(2+) ion per subunit.</text>
</comment>
<comment type="subcellular location">
    <subcellularLocation>
        <location evidence="2">Lysosome</location>
    </subcellularLocation>
    <text evidence="2">The 63-kDa precursor protein localizes to pre-lysosomal compartments and tightly associates with organelle membranes, most likely the endoplasmic reticulum. In contrast, proteolytically processed fragments of 34-, 18- and 10-kDa are found in lysosomal fractions and lose their membrane association.</text>
</comment>
<comment type="PTM">
    <text evidence="2">N-glycosylated with both high mannose and complex type sugars.</text>
</comment>
<comment type="PTM">
    <text evidence="1">The conversion to 3-oxoalanine (also known as C-formylglycine, FGly), of a serine or cysteine residue in prokaryotes and of a cysteine residue in eukaryotes, is critical for catalytic activity.</text>
</comment>
<comment type="PTM">
    <text evidence="2">63-kDa precursor undergoes proteolytic processing in two steps, yielding two fragments in the first step (apparent molecular masses of 44 and 18 kDa) (By similarity). In the second step, the 44-kDa fragment is processed further to the 34- and 10-kDa chains. The 10-kDa chain is a cleavage product of the 44-kDa fragment but linked to the 18-kDa chain through a disulfide bridge (By similarity).</text>
</comment>
<comment type="similarity">
    <text evidence="5">Belongs to the sulfatase family.</text>
</comment>
<sequence>MGWLFLKVLLVGMVFSGLLYPFVDFSISGETRAPRPNIVIILADDMGWGDLGANWAETKDTTNLDKMASEGMRFVDFHAAASTCSPSRASLLTGRLGLRNGVTHNFAVTSVGGLPLNETTLAEVLQQAGYVTAMIGKWHLGHHGSYHPSFRGFDYYFGIPYSNDMGCTDNPGYNYPPCPACPQSDGRWRNPDRDCYTDVALPLYENLNIVEQPVNLSGLAQKYAERAVEFIEQASTSGRPFLLYVGLAHMHVPLSVTPPLANPQSQRLYRASLQEMDSLVGQIKDKVDHVAKENTLLWFAGDNGPWAQKCELAGSMGPFSGLWQTHQGGSPAKQTTWEGGHRVPALAYWPGRVPVNVTSTALLSLLDIFPTVIALAGASLPPNRKFDGVDVSEVLFGKSQTGHRVLFHPNSGAAGEYGALQTVRLDRYKAFYITGGAKACDGGVGPEQHHVSPLIFNLEDDAAESSPLQKGSPEYQELLPKVTRVLADVLQDIADDNSSQADYTQDPSVTPCCNPYQITCRCQPGE</sequence>
<proteinExistence type="evidence at transcript level"/>
<gene>
    <name type="primary">Arsg</name>
</gene>
<reference key="1">
    <citation type="journal article" date="2004" name="Nature">
        <title>Genome sequence of the Brown Norway rat yields insights into mammalian evolution.</title>
        <authorList>
            <person name="Gibbs R.A."/>
            <person name="Weinstock G.M."/>
            <person name="Metzker M.L."/>
            <person name="Muzny D.M."/>
            <person name="Sodergren E.J."/>
            <person name="Scherer S."/>
            <person name="Scott G."/>
            <person name="Steffen D."/>
            <person name="Worley K.C."/>
            <person name="Burch P.E."/>
            <person name="Okwuonu G."/>
            <person name="Hines S."/>
            <person name="Lewis L."/>
            <person name="Deramo C."/>
            <person name="Delgado O."/>
            <person name="Dugan-Rocha S."/>
            <person name="Miner G."/>
            <person name="Morgan M."/>
            <person name="Hawes A."/>
            <person name="Gill R."/>
            <person name="Holt R.A."/>
            <person name="Adams M.D."/>
            <person name="Amanatides P.G."/>
            <person name="Baden-Tillson H."/>
            <person name="Barnstead M."/>
            <person name="Chin S."/>
            <person name="Evans C.A."/>
            <person name="Ferriera S."/>
            <person name="Fosler C."/>
            <person name="Glodek A."/>
            <person name="Gu Z."/>
            <person name="Jennings D."/>
            <person name="Kraft C.L."/>
            <person name="Nguyen T."/>
            <person name="Pfannkoch C.M."/>
            <person name="Sitter C."/>
            <person name="Sutton G.G."/>
            <person name="Venter J.C."/>
            <person name="Woodage T."/>
            <person name="Smith D."/>
            <person name="Lee H.-M."/>
            <person name="Gustafson E."/>
            <person name="Cahill P."/>
            <person name="Kana A."/>
            <person name="Doucette-Stamm L."/>
            <person name="Weinstock K."/>
            <person name="Fechtel K."/>
            <person name="Weiss R.B."/>
            <person name="Dunn D.M."/>
            <person name="Green E.D."/>
            <person name="Blakesley R.W."/>
            <person name="Bouffard G.G."/>
            <person name="De Jong P.J."/>
            <person name="Osoegawa K."/>
            <person name="Zhu B."/>
            <person name="Marra M."/>
            <person name="Schein J."/>
            <person name="Bosdet I."/>
            <person name="Fjell C."/>
            <person name="Jones S."/>
            <person name="Krzywinski M."/>
            <person name="Mathewson C."/>
            <person name="Siddiqui A."/>
            <person name="Wye N."/>
            <person name="McPherson J."/>
            <person name="Zhao S."/>
            <person name="Fraser C.M."/>
            <person name="Shetty J."/>
            <person name="Shatsman S."/>
            <person name="Geer K."/>
            <person name="Chen Y."/>
            <person name="Abramzon S."/>
            <person name="Nierman W.C."/>
            <person name="Havlak P.H."/>
            <person name="Chen R."/>
            <person name="Durbin K.J."/>
            <person name="Egan A."/>
            <person name="Ren Y."/>
            <person name="Song X.-Z."/>
            <person name="Li B."/>
            <person name="Liu Y."/>
            <person name="Qin X."/>
            <person name="Cawley S."/>
            <person name="Cooney A.J."/>
            <person name="D'Souza L.M."/>
            <person name="Martin K."/>
            <person name="Wu J.Q."/>
            <person name="Gonzalez-Garay M.L."/>
            <person name="Jackson A.R."/>
            <person name="Kalafus K.J."/>
            <person name="McLeod M.P."/>
            <person name="Milosavljevic A."/>
            <person name="Virk D."/>
            <person name="Volkov A."/>
            <person name="Wheeler D.A."/>
            <person name="Zhang Z."/>
            <person name="Bailey J.A."/>
            <person name="Eichler E.E."/>
            <person name="Tuzun E."/>
            <person name="Birney E."/>
            <person name="Mongin E."/>
            <person name="Ureta-Vidal A."/>
            <person name="Woodwark C."/>
            <person name="Zdobnov E."/>
            <person name="Bork P."/>
            <person name="Suyama M."/>
            <person name="Torrents D."/>
            <person name="Alexandersson M."/>
            <person name="Trask B.J."/>
            <person name="Young J.M."/>
            <person name="Huang H."/>
            <person name="Wang H."/>
            <person name="Xing H."/>
            <person name="Daniels S."/>
            <person name="Gietzen D."/>
            <person name="Schmidt J."/>
            <person name="Stevens K."/>
            <person name="Vitt U."/>
            <person name="Wingrove J."/>
            <person name="Camara F."/>
            <person name="Mar Alba M."/>
            <person name="Abril J.F."/>
            <person name="Guigo R."/>
            <person name="Smit A."/>
            <person name="Dubchak I."/>
            <person name="Rubin E.M."/>
            <person name="Couronne O."/>
            <person name="Poliakov A."/>
            <person name="Huebner N."/>
            <person name="Ganten D."/>
            <person name="Goesele C."/>
            <person name="Hummel O."/>
            <person name="Kreitler T."/>
            <person name="Lee Y.-A."/>
            <person name="Monti J."/>
            <person name="Schulz H."/>
            <person name="Zimdahl H."/>
            <person name="Himmelbauer H."/>
            <person name="Lehrach H."/>
            <person name="Jacob H.J."/>
            <person name="Bromberg S."/>
            <person name="Gullings-Handley J."/>
            <person name="Jensen-Seaman M.I."/>
            <person name="Kwitek A.E."/>
            <person name="Lazar J."/>
            <person name="Pasko D."/>
            <person name="Tonellato P.J."/>
            <person name="Twigger S."/>
            <person name="Ponting C.P."/>
            <person name="Duarte J.M."/>
            <person name="Rice S."/>
            <person name="Goodstadt L."/>
            <person name="Beatson S.A."/>
            <person name="Emes R.D."/>
            <person name="Winter E.E."/>
            <person name="Webber C."/>
            <person name="Brandt P."/>
            <person name="Nyakatura G."/>
            <person name="Adetobi M."/>
            <person name="Chiaromonte F."/>
            <person name="Elnitski L."/>
            <person name="Eswara P."/>
            <person name="Hardison R.C."/>
            <person name="Hou M."/>
            <person name="Kolbe D."/>
            <person name="Makova K."/>
            <person name="Miller W."/>
            <person name="Nekrutenko A."/>
            <person name="Riemer C."/>
            <person name="Schwartz S."/>
            <person name="Taylor J."/>
            <person name="Yang S."/>
            <person name="Zhang Y."/>
            <person name="Lindpaintner K."/>
            <person name="Andrews T.D."/>
            <person name="Caccamo M."/>
            <person name="Clamp M."/>
            <person name="Clarke L."/>
            <person name="Curwen V."/>
            <person name="Durbin R.M."/>
            <person name="Eyras E."/>
            <person name="Searle S.M."/>
            <person name="Cooper G.M."/>
            <person name="Batzoglou S."/>
            <person name="Brudno M."/>
            <person name="Sidow A."/>
            <person name="Stone E.A."/>
            <person name="Payseur B.A."/>
            <person name="Bourque G."/>
            <person name="Lopez-Otin C."/>
            <person name="Puente X.S."/>
            <person name="Chakrabarti K."/>
            <person name="Chatterji S."/>
            <person name="Dewey C."/>
            <person name="Pachter L."/>
            <person name="Bray N."/>
            <person name="Yap V.B."/>
            <person name="Caspi A."/>
            <person name="Tesler G."/>
            <person name="Pevzner P.A."/>
            <person name="Haussler D."/>
            <person name="Roskin K.M."/>
            <person name="Baertsch R."/>
            <person name="Clawson H."/>
            <person name="Furey T.S."/>
            <person name="Hinrichs A.S."/>
            <person name="Karolchik D."/>
            <person name="Kent W.J."/>
            <person name="Rosenbloom K.R."/>
            <person name="Trumbower H."/>
            <person name="Weirauch M."/>
            <person name="Cooper D.N."/>
            <person name="Stenson P.D."/>
            <person name="Ma B."/>
            <person name="Brent M."/>
            <person name="Arumugam M."/>
            <person name="Shteynberg D."/>
            <person name="Copley R.R."/>
            <person name="Taylor M.S."/>
            <person name="Riethman H."/>
            <person name="Mudunuri U."/>
            <person name="Peterson J."/>
            <person name="Guyer M."/>
            <person name="Felsenfeld A."/>
            <person name="Old S."/>
            <person name="Mockrin S."/>
            <person name="Collins F.S."/>
        </authorList>
    </citation>
    <scope>NUCLEOTIDE SEQUENCE [LARGE SCALE GENOMIC DNA]</scope>
    <source>
        <strain>Brown Norway</strain>
    </source>
</reference>
<reference key="2">
    <citation type="journal article" date="2005" name="Hum. Mol. Genet.">
        <title>Sulfatases and sulfatase modifying factors: an exclusive and promiscuous relationship.</title>
        <authorList>
            <person name="Sardiello M."/>
            <person name="Annunziata I."/>
            <person name="Roma G."/>
            <person name="Ballabio A."/>
        </authorList>
    </citation>
    <scope>IDENTIFICATION</scope>
</reference>
<dbReference type="EC" id="3.1.6.1" evidence="3"/>
<dbReference type="EC" id="3.1.6.15" evidence="3"/>
<dbReference type="EMBL" id="AABR03073953">
    <property type="status" value="NOT_ANNOTATED_CDS"/>
    <property type="molecule type" value="Genomic_DNA"/>
</dbReference>
<dbReference type="EMBL" id="AABR03074766">
    <property type="status" value="NOT_ANNOTATED_CDS"/>
    <property type="molecule type" value="Genomic_DNA"/>
</dbReference>
<dbReference type="EMBL" id="AABR03075952">
    <property type="status" value="NOT_ANNOTATED_CDS"/>
    <property type="molecule type" value="Genomic_DNA"/>
</dbReference>
<dbReference type="EMBL" id="AABR03076519">
    <property type="status" value="NOT_ANNOTATED_CDS"/>
    <property type="molecule type" value="Genomic_DNA"/>
</dbReference>
<dbReference type="EMBL" id="AABR03076696">
    <property type="status" value="NOT_ANNOTATED_CDS"/>
    <property type="molecule type" value="Genomic_DNA"/>
</dbReference>
<dbReference type="EMBL" id="BN000738">
    <property type="protein sequence ID" value="CAI84984.1"/>
    <property type="molecule type" value="mRNA"/>
</dbReference>
<dbReference type="RefSeq" id="NP_001041342.1">
    <property type="nucleotide sequence ID" value="NM_001047877.2"/>
</dbReference>
<dbReference type="RefSeq" id="XP_006247661.1">
    <property type="nucleotide sequence ID" value="XM_006247599.3"/>
</dbReference>
<dbReference type="RefSeq" id="XP_006247662.1">
    <property type="nucleotide sequence ID" value="XM_006247600.3"/>
</dbReference>
<dbReference type="RefSeq" id="XP_006247663.1">
    <property type="nucleotide sequence ID" value="XM_006247601.3"/>
</dbReference>
<dbReference type="RefSeq" id="XP_006247664.1">
    <property type="nucleotide sequence ID" value="XM_006247602.5"/>
</dbReference>
<dbReference type="RefSeq" id="XP_006247665.1">
    <property type="nucleotide sequence ID" value="XM_006247603.2"/>
</dbReference>
<dbReference type="RefSeq" id="XP_006247666.1">
    <property type="nucleotide sequence ID" value="XM_006247604.5"/>
</dbReference>
<dbReference type="RefSeq" id="XP_006247668.1">
    <property type="nucleotide sequence ID" value="XM_006247606.5"/>
</dbReference>
<dbReference type="RefSeq" id="XP_006247669.1">
    <property type="nucleotide sequence ID" value="XM_006247607.5"/>
</dbReference>
<dbReference type="RefSeq" id="XP_006247670.1">
    <property type="nucleotide sequence ID" value="XM_006247608.5"/>
</dbReference>
<dbReference type="RefSeq" id="XP_008766590.1">
    <property type="nucleotide sequence ID" value="XM_008768368.2"/>
</dbReference>
<dbReference type="RefSeq" id="XP_008766591.1">
    <property type="nucleotide sequence ID" value="XM_008768369.3"/>
</dbReference>
<dbReference type="RefSeq" id="XP_038942102.1">
    <property type="nucleotide sequence ID" value="XM_039086174.2"/>
</dbReference>
<dbReference type="RefSeq" id="XP_038942103.1">
    <property type="nucleotide sequence ID" value="XM_039086175.2"/>
</dbReference>
<dbReference type="RefSeq" id="XP_063125292.1">
    <property type="nucleotide sequence ID" value="XM_063269222.1"/>
</dbReference>
<dbReference type="RefSeq" id="XP_063125293.1">
    <property type="nucleotide sequence ID" value="XM_063269223.1"/>
</dbReference>
<dbReference type="RefSeq" id="XP_063125294.1">
    <property type="nucleotide sequence ID" value="XM_063269224.1"/>
</dbReference>
<dbReference type="SMR" id="Q32KJ9"/>
<dbReference type="FunCoup" id="Q32KJ9">
    <property type="interactions" value="127"/>
</dbReference>
<dbReference type="STRING" id="10116.ENSRNOP00000005257"/>
<dbReference type="GlyCosmos" id="Q32KJ9">
    <property type="glycosylation" value="4 sites, No reported glycans"/>
</dbReference>
<dbReference type="GlyGen" id="Q32KJ9">
    <property type="glycosylation" value="4 sites"/>
</dbReference>
<dbReference type="PhosphoSitePlus" id="Q32KJ9"/>
<dbReference type="PaxDb" id="10116-ENSRNOP00000005257"/>
<dbReference type="Ensembl" id="ENSRNOT00000113597.1">
    <property type="protein sequence ID" value="ENSRNOP00000086727.1"/>
    <property type="gene ID" value="ENSRNOG00000003931.6"/>
</dbReference>
<dbReference type="GeneID" id="303631"/>
<dbReference type="KEGG" id="rno:303631"/>
<dbReference type="AGR" id="RGD:1306571"/>
<dbReference type="CTD" id="22901"/>
<dbReference type="RGD" id="1306571">
    <property type="gene designation" value="Arsg"/>
</dbReference>
<dbReference type="VEuPathDB" id="HostDB:ENSRNOG00000003827"/>
<dbReference type="eggNOG" id="KOG3867">
    <property type="taxonomic scope" value="Eukaryota"/>
</dbReference>
<dbReference type="GeneTree" id="ENSGT00940000159093"/>
<dbReference type="HOGENOM" id="CLU_006332_13_6_1"/>
<dbReference type="InParanoid" id="Q32KJ9"/>
<dbReference type="OMA" id="HVACRCQ"/>
<dbReference type="OrthoDB" id="103349at2759"/>
<dbReference type="PhylomeDB" id="Q32KJ9"/>
<dbReference type="TreeFam" id="TF314186"/>
<dbReference type="Reactome" id="R-RNO-1663150">
    <property type="pathway name" value="The activation of arylsulfatases"/>
</dbReference>
<dbReference type="Reactome" id="R-RNO-9840310">
    <property type="pathway name" value="Glycosphingolipid catabolism"/>
</dbReference>
<dbReference type="PRO" id="PR:Q32KJ9"/>
<dbReference type="Proteomes" id="UP000002494">
    <property type="component" value="Chromosome 10"/>
</dbReference>
<dbReference type="Bgee" id="ENSRNOG00000003931">
    <property type="expression patterns" value="Expressed in heart and 18 other cell types or tissues"/>
</dbReference>
<dbReference type="GO" id="GO:0005783">
    <property type="term" value="C:endoplasmic reticulum"/>
    <property type="evidence" value="ECO:0000266"/>
    <property type="project" value="RGD"/>
</dbReference>
<dbReference type="GO" id="GO:0005615">
    <property type="term" value="C:extracellular space"/>
    <property type="evidence" value="ECO:0000266"/>
    <property type="project" value="RGD"/>
</dbReference>
<dbReference type="GO" id="GO:0005764">
    <property type="term" value="C:lysosome"/>
    <property type="evidence" value="ECO:0000250"/>
    <property type="project" value="UniProtKB"/>
</dbReference>
<dbReference type="GO" id="GO:0004065">
    <property type="term" value="F:arylsulfatase activity"/>
    <property type="evidence" value="ECO:0000250"/>
    <property type="project" value="UniProtKB"/>
</dbReference>
<dbReference type="GO" id="GO:0046872">
    <property type="term" value="F:metal ion binding"/>
    <property type="evidence" value="ECO:0007669"/>
    <property type="project" value="UniProtKB-KW"/>
</dbReference>
<dbReference type="GO" id="GO:0033889">
    <property type="term" value="F:N-sulfoglucosamine-3-sulfatase activity"/>
    <property type="evidence" value="ECO:0000266"/>
    <property type="project" value="RGD"/>
</dbReference>
<dbReference type="GO" id="GO:0010467">
    <property type="term" value="P:gene expression"/>
    <property type="evidence" value="ECO:0000266"/>
    <property type="project" value="RGD"/>
</dbReference>
<dbReference type="GO" id="GO:0010001">
    <property type="term" value="P:glial cell differentiation"/>
    <property type="evidence" value="ECO:0000266"/>
    <property type="project" value="RGD"/>
</dbReference>
<dbReference type="GO" id="GO:0048872">
    <property type="term" value="P:homeostasis of number of cells"/>
    <property type="evidence" value="ECO:0000266"/>
    <property type="project" value="RGD"/>
</dbReference>
<dbReference type="GO" id="GO:0007040">
    <property type="term" value="P:lysosome organization"/>
    <property type="evidence" value="ECO:0000266"/>
    <property type="project" value="RGD"/>
</dbReference>
<dbReference type="GO" id="GO:0051402">
    <property type="term" value="P:neuron apoptotic process"/>
    <property type="evidence" value="ECO:0000266"/>
    <property type="project" value="RGD"/>
</dbReference>
<dbReference type="GO" id="GO:0060041">
    <property type="term" value="P:retina development in camera-type eye"/>
    <property type="evidence" value="ECO:0000266"/>
    <property type="project" value="RGD"/>
</dbReference>
<dbReference type="GO" id="GO:0006790">
    <property type="term" value="P:sulfur compound metabolic process"/>
    <property type="evidence" value="ECO:0000266"/>
    <property type="project" value="RGD"/>
</dbReference>
<dbReference type="CDD" id="cd16161">
    <property type="entry name" value="ARSG"/>
    <property type="match status" value="1"/>
</dbReference>
<dbReference type="FunFam" id="3.30.1120.10:FF:000006">
    <property type="entry name" value="Arylsulfatase G"/>
    <property type="match status" value="1"/>
</dbReference>
<dbReference type="FunFam" id="3.40.720.10:FF:000031">
    <property type="entry name" value="arylsulfatase G isoform X1"/>
    <property type="match status" value="1"/>
</dbReference>
<dbReference type="Gene3D" id="3.30.1120.10">
    <property type="match status" value="1"/>
</dbReference>
<dbReference type="Gene3D" id="3.40.720.10">
    <property type="entry name" value="Alkaline Phosphatase, subunit A"/>
    <property type="match status" value="1"/>
</dbReference>
<dbReference type="InterPro" id="IPR017850">
    <property type="entry name" value="Alkaline_phosphatase_core_sf"/>
</dbReference>
<dbReference type="InterPro" id="IPR050738">
    <property type="entry name" value="Sulfatase"/>
</dbReference>
<dbReference type="InterPro" id="IPR024607">
    <property type="entry name" value="Sulfatase_CS"/>
</dbReference>
<dbReference type="InterPro" id="IPR000917">
    <property type="entry name" value="Sulfatase_N"/>
</dbReference>
<dbReference type="PANTHER" id="PTHR42693">
    <property type="entry name" value="ARYLSULFATASE FAMILY MEMBER"/>
    <property type="match status" value="1"/>
</dbReference>
<dbReference type="PANTHER" id="PTHR42693:SF42">
    <property type="entry name" value="ARYLSULFATASE G"/>
    <property type="match status" value="1"/>
</dbReference>
<dbReference type="Pfam" id="PF00884">
    <property type="entry name" value="Sulfatase"/>
    <property type="match status" value="1"/>
</dbReference>
<dbReference type="Pfam" id="PF14707">
    <property type="entry name" value="Sulfatase_C"/>
    <property type="match status" value="1"/>
</dbReference>
<dbReference type="SUPFAM" id="SSF53649">
    <property type="entry name" value="Alkaline phosphatase-like"/>
    <property type="match status" value="1"/>
</dbReference>
<dbReference type="PROSITE" id="PS00523">
    <property type="entry name" value="SULFATASE_1"/>
    <property type="match status" value="1"/>
</dbReference>
<dbReference type="PROSITE" id="PS00149">
    <property type="entry name" value="SULFATASE_2"/>
    <property type="match status" value="1"/>
</dbReference>
<protein>
    <recommendedName>
        <fullName>Arylsulfatase G</fullName>
        <shortName>ASG</shortName>
        <ecNumber evidence="3">3.1.6.1</ecNumber>
    </recommendedName>
    <alternativeName>
        <fullName>N-sulfoglucosamine-3-sulfatase</fullName>
        <ecNumber evidence="3">3.1.6.15</ecNumber>
    </alternativeName>
</protein>
<evidence type="ECO:0000250" key="1">
    <source>
        <dbReference type="UniProtKB" id="P15289"/>
    </source>
</evidence>
<evidence type="ECO:0000250" key="2">
    <source>
        <dbReference type="UniProtKB" id="Q3TYD4"/>
    </source>
</evidence>
<evidence type="ECO:0000250" key="3">
    <source>
        <dbReference type="UniProtKB" id="Q96EG1"/>
    </source>
</evidence>
<evidence type="ECO:0000255" key="4"/>
<evidence type="ECO:0000305" key="5"/>
<organism>
    <name type="scientific">Rattus norvegicus</name>
    <name type="common">Rat</name>
    <dbReference type="NCBI Taxonomy" id="10116"/>
    <lineage>
        <taxon>Eukaryota</taxon>
        <taxon>Metazoa</taxon>
        <taxon>Chordata</taxon>
        <taxon>Craniata</taxon>
        <taxon>Vertebrata</taxon>
        <taxon>Euteleostomi</taxon>
        <taxon>Mammalia</taxon>
        <taxon>Eutheria</taxon>
        <taxon>Euarchontoglires</taxon>
        <taxon>Glires</taxon>
        <taxon>Rodentia</taxon>
        <taxon>Myomorpha</taxon>
        <taxon>Muroidea</taxon>
        <taxon>Muridae</taxon>
        <taxon>Murinae</taxon>
        <taxon>Rattus</taxon>
    </lineage>
</organism>
<feature type="signal peptide" evidence="4">
    <location>
        <begin position="1"/>
        <end position="16"/>
    </location>
</feature>
<feature type="chain" id="PRO_0000238664" description="Arylsulfatase G">
    <location>
        <begin position="17"/>
        <end position="526"/>
    </location>
</feature>
<feature type="active site" description="Nucleophile" evidence="1">
    <location>
        <position position="84"/>
    </location>
</feature>
<feature type="active site" evidence="1">
    <location>
        <position position="139"/>
    </location>
</feature>
<feature type="binding site" evidence="1">
    <location>
        <position position="44"/>
    </location>
    <ligand>
        <name>Ca(2+)</name>
        <dbReference type="ChEBI" id="CHEBI:29108"/>
    </ligand>
</feature>
<feature type="binding site" evidence="1">
    <location>
        <position position="45"/>
    </location>
    <ligand>
        <name>Ca(2+)</name>
        <dbReference type="ChEBI" id="CHEBI:29108"/>
    </ligand>
</feature>
<feature type="binding site" description="via 3-oxoalanine" evidence="1">
    <location>
        <position position="84"/>
    </location>
    <ligand>
        <name>Ca(2+)</name>
        <dbReference type="ChEBI" id="CHEBI:29108"/>
    </ligand>
</feature>
<feature type="binding site" evidence="1">
    <location>
        <position position="137"/>
    </location>
    <ligand>
        <name>substrate</name>
    </ligand>
</feature>
<feature type="binding site" evidence="1">
    <location>
        <position position="162"/>
    </location>
    <ligand>
        <name>substrate</name>
    </ligand>
</feature>
<feature type="binding site" evidence="1">
    <location>
        <position position="251"/>
    </location>
    <ligand>
        <name>substrate</name>
    </ligand>
</feature>
<feature type="binding site" evidence="1">
    <location>
        <position position="302"/>
    </location>
    <ligand>
        <name>Ca(2+)</name>
        <dbReference type="ChEBI" id="CHEBI:29108"/>
    </ligand>
</feature>
<feature type="binding site" evidence="1">
    <location>
        <position position="303"/>
    </location>
    <ligand>
        <name>Ca(2+)</name>
        <dbReference type="ChEBI" id="CHEBI:29108"/>
    </ligand>
</feature>
<feature type="modified residue" description="3-oxoalanine (Cys)" evidence="1">
    <location>
        <position position="84"/>
    </location>
</feature>
<feature type="glycosylation site" description="N-linked (GlcNAc...) asparagine" evidence="2">
    <location>
        <position position="117"/>
    </location>
</feature>
<feature type="glycosylation site" description="N-linked (GlcNAc...) asparagine" evidence="2">
    <location>
        <position position="215"/>
    </location>
</feature>
<feature type="glycosylation site" description="N-linked (GlcNAc...) asparagine" evidence="4">
    <location>
        <position position="356"/>
    </location>
</feature>
<feature type="glycosylation site" description="N-linked (GlcNAc...) asparagine" evidence="2">
    <location>
        <position position="497"/>
    </location>
</feature>